<gene>
    <name type="primary">bglK</name>
    <name type="ordered locus">lin2907</name>
</gene>
<keyword id="KW-0067">ATP-binding</keyword>
<keyword id="KW-0119">Carbohydrate metabolism</keyword>
<keyword id="KW-0418">Kinase</keyword>
<keyword id="KW-0547">Nucleotide-binding</keyword>
<keyword id="KW-0808">Transferase</keyword>
<accession>Q926Y3</accession>
<evidence type="ECO:0000250" key="1"/>
<evidence type="ECO:0000269" key="2">
    <source>
    </source>
</evidence>
<evidence type="ECO:0000305" key="3"/>
<dbReference type="EC" id="2.7.1.85"/>
<dbReference type="EMBL" id="AL596174">
    <property type="protein sequence ID" value="CAC98132.1"/>
    <property type="molecule type" value="Genomic_DNA"/>
</dbReference>
<dbReference type="PIR" id="AD1795">
    <property type="entry name" value="AD1795"/>
</dbReference>
<dbReference type="RefSeq" id="WP_010991440.1">
    <property type="nucleotide sequence ID" value="NC_003212.1"/>
</dbReference>
<dbReference type="SMR" id="Q926Y3"/>
<dbReference type="STRING" id="272626.gene:17567293"/>
<dbReference type="GeneID" id="93236182"/>
<dbReference type="KEGG" id="lin:lin2907"/>
<dbReference type="eggNOG" id="COG1940">
    <property type="taxonomic scope" value="Bacteria"/>
</dbReference>
<dbReference type="HOGENOM" id="CLU_036604_0_2_9"/>
<dbReference type="OrthoDB" id="9795247at2"/>
<dbReference type="Proteomes" id="UP000002513">
    <property type="component" value="Chromosome"/>
</dbReference>
<dbReference type="GO" id="GO:0005524">
    <property type="term" value="F:ATP binding"/>
    <property type="evidence" value="ECO:0007669"/>
    <property type="project" value="UniProtKB-KW"/>
</dbReference>
<dbReference type="GO" id="GO:0047700">
    <property type="term" value="F:beta-glucoside kinase activity"/>
    <property type="evidence" value="ECO:0007669"/>
    <property type="project" value="UniProtKB-EC"/>
</dbReference>
<dbReference type="CDD" id="cd24068">
    <property type="entry name" value="ASKHA_NBD_ROK_FnNanK-like"/>
    <property type="match status" value="1"/>
</dbReference>
<dbReference type="Gene3D" id="3.30.420.40">
    <property type="match status" value="2"/>
</dbReference>
<dbReference type="InterPro" id="IPR043129">
    <property type="entry name" value="ATPase_NBD"/>
</dbReference>
<dbReference type="InterPro" id="IPR000600">
    <property type="entry name" value="ROK"/>
</dbReference>
<dbReference type="PANTHER" id="PTHR18964:SF165">
    <property type="entry name" value="BETA-GLUCOSIDE KINASE"/>
    <property type="match status" value="1"/>
</dbReference>
<dbReference type="PANTHER" id="PTHR18964">
    <property type="entry name" value="ROK (REPRESSOR, ORF, KINASE) FAMILY"/>
    <property type="match status" value="1"/>
</dbReference>
<dbReference type="Pfam" id="PF00480">
    <property type="entry name" value="ROK"/>
    <property type="match status" value="1"/>
</dbReference>
<dbReference type="SUPFAM" id="SSF53067">
    <property type="entry name" value="Actin-like ATPase domain"/>
    <property type="match status" value="1"/>
</dbReference>
<feature type="chain" id="PRO_0000390477" description="Beta-glucoside kinase">
    <location>
        <begin position="1"/>
        <end position="294"/>
    </location>
</feature>
<feature type="binding site" evidence="1">
    <location>
        <begin position="5"/>
        <end position="11"/>
    </location>
    <ligand>
        <name>ATP</name>
        <dbReference type="ChEBI" id="CHEBI:30616"/>
    </ligand>
</feature>
<name>BGLK_LISIN</name>
<proteinExistence type="evidence at protein level"/>
<comment type="function">
    <text evidence="2">Catalyzes the ATP-dependent phosphorylation of cellobiose to produce cellobiose-6'-P. May have a dual role of kinase and transcriptional regulator of the cellobiose-PTS operon.</text>
</comment>
<comment type="catalytic activity">
    <reaction evidence="2">
        <text>D-cellobiose + ATP = 6-phospho-beta-D-glucosyl-(1-&gt;4)-D-glucose + ADP + H(+)</text>
        <dbReference type="Rhea" id="RHEA:21944"/>
        <dbReference type="ChEBI" id="CHEBI:15378"/>
        <dbReference type="ChEBI" id="CHEBI:17057"/>
        <dbReference type="ChEBI" id="CHEBI:30616"/>
        <dbReference type="ChEBI" id="CHEBI:58312"/>
        <dbReference type="ChEBI" id="CHEBI:456216"/>
        <dbReference type="EC" id="2.7.1.85"/>
    </reaction>
</comment>
<comment type="similarity">
    <text evidence="3">Belongs to the ROK (NagC/XylR) family.</text>
</comment>
<protein>
    <recommendedName>
        <fullName>Beta-glucoside kinase</fullName>
        <ecNumber>2.7.1.85</ecNumber>
    </recommendedName>
</protein>
<organism>
    <name type="scientific">Listeria innocua serovar 6a (strain ATCC BAA-680 / CLIP 11262)</name>
    <dbReference type="NCBI Taxonomy" id="272626"/>
    <lineage>
        <taxon>Bacteria</taxon>
        <taxon>Bacillati</taxon>
        <taxon>Bacillota</taxon>
        <taxon>Bacilli</taxon>
        <taxon>Bacillales</taxon>
        <taxon>Listeriaceae</taxon>
        <taxon>Listeria</taxon>
    </lineage>
</organism>
<sequence>MKIAAFDIGGTALKMGVVLPHGEIILTKSAEIIASDGDQILAEMKLFLAENTDVTGIAVSAPGYVNPKTGLITMGGAIRRFDNFNLKEWLEAETGLPVAIENDANCALLAEKWLGKGQDLDDFLCLTIGTGIGGGIFSNGALVRGGRFRAGEFGYMFSERPGAFRPGKYTLNETTTMLVLRRQYAQLTGRPLKEITGEEIFANYDAHDPISERLINEFYTGICTGLYNLIYLFDPTHIFIGGGITSRPTFITELKHHMASFGLRDTIIETATHKNQAGLLGAVYHFLQEENRHE</sequence>
<reference key="1">
    <citation type="journal article" date="2001" name="Science">
        <title>Comparative genomics of Listeria species.</title>
        <authorList>
            <person name="Glaser P."/>
            <person name="Frangeul L."/>
            <person name="Buchrieser C."/>
            <person name="Rusniok C."/>
            <person name="Amend A."/>
            <person name="Baquero F."/>
            <person name="Berche P."/>
            <person name="Bloecker H."/>
            <person name="Brandt P."/>
            <person name="Chakraborty T."/>
            <person name="Charbit A."/>
            <person name="Chetouani F."/>
            <person name="Couve E."/>
            <person name="de Daruvar A."/>
            <person name="Dehoux P."/>
            <person name="Domann E."/>
            <person name="Dominguez-Bernal G."/>
            <person name="Duchaud E."/>
            <person name="Durant L."/>
            <person name="Dussurget O."/>
            <person name="Entian K.-D."/>
            <person name="Fsihi H."/>
            <person name="Garcia-del Portillo F."/>
            <person name="Garrido P."/>
            <person name="Gautier L."/>
            <person name="Goebel W."/>
            <person name="Gomez-Lopez N."/>
            <person name="Hain T."/>
            <person name="Hauf J."/>
            <person name="Jackson D."/>
            <person name="Jones L.-M."/>
            <person name="Kaerst U."/>
            <person name="Kreft J."/>
            <person name="Kuhn M."/>
            <person name="Kunst F."/>
            <person name="Kurapkat G."/>
            <person name="Madueno E."/>
            <person name="Maitournam A."/>
            <person name="Mata Vicente J."/>
            <person name="Ng E."/>
            <person name="Nedjari H."/>
            <person name="Nordsiek G."/>
            <person name="Novella S."/>
            <person name="de Pablos B."/>
            <person name="Perez-Diaz J.-C."/>
            <person name="Purcell R."/>
            <person name="Remmel B."/>
            <person name="Rose M."/>
            <person name="Schlueter T."/>
            <person name="Simoes N."/>
            <person name="Tierrez A."/>
            <person name="Vazquez-Boland J.-A."/>
            <person name="Voss H."/>
            <person name="Wehland J."/>
            <person name="Cossart P."/>
        </authorList>
    </citation>
    <scope>NUCLEOTIDE SEQUENCE [LARGE SCALE GENOMIC DNA]</scope>
    <source>
        <strain>ATCC BAA-680 / CLIP 11262</strain>
    </source>
</reference>
<reference key="2">
    <citation type="journal article" date="2002" name="J. Biol. Chem.">
        <title>Beta-glucoside kinase (BglK) from Klebsiella pneumoniae. Purification, properties, and preparative synthesis of 6-phospho-beta-D-glucosides.</title>
        <authorList>
            <person name="Thompson J."/>
            <person name="Lichtenthaler F.W."/>
            <person name="Peters S."/>
            <person name="Pikis A."/>
        </authorList>
    </citation>
    <scope>CATALYTIC ACTIVITY</scope>
    <scope>FUNCTION</scope>
    <source>
        <strain>ATCC BAA-680 / CLIP 11262</strain>
    </source>
</reference>